<name>FZD8_XENLA</name>
<organism>
    <name type="scientific">Xenopus laevis</name>
    <name type="common">African clawed frog</name>
    <dbReference type="NCBI Taxonomy" id="8355"/>
    <lineage>
        <taxon>Eukaryota</taxon>
        <taxon>Metazoa</taxon>
        <taxon>Chordata</taxon>
        <taxon>Craniata</taxon>
        <taxon>Vertebrata</taxon>
        <taxon>Euteleostomi</taxon>
        <taxon>Amphibia</taxon>
        <taxon>Batrachia</taxon>
        <taxon>Anura</taxon>
        <taxon>Pipoidea</taxon>
        <taxon>Pipidae</taxon>
        <taxon>Xenopodinae</taxon>
        <taxon>Xenopus</taxon>
        <taxon>Xenopus</taxon>
    </lineage>
</organism>
<sequence>MESLSLSLLLLVSWLQGSQCAAAKELSCQEITVPLCKDIGYNYTYMPNQFNHDTQDEAGMEVHQFWPLVVIHCSPDLKFFLCSMYTPICLEDYKKPLPPCRSVCERARAGCAPLMRQYGFAWPDRMRCDRLPEQGNPDTLCMDYYNRTEQTTAAPSHPEPPKPPARSVPKGRTRVEPPRSRSRATGCESGCQCRAPMVQVSNERHPLYNRVRTGQIPNCAMPCHNPFFSPEERTFTEFWIGLWSVLCFASTFATVSTFLIDMERFKYPERPIIFLSACYLLVSTGYLIRLIAGHEKVACSRGELDLEHIIHYETTGPALCTLVFLLIYFFGMASSIWWVILSLTWFLAAGMKWGNEAIAGYSQYFHLAAWLVPSIKSIAVLALSSVDGDPVAGICFVGNQNLDNLRGFVLAPLVIYLFIGSMFLLAGFVSLFRIRSVIKQGGTKTDKLEKLMIRIGIFSVLYTVPATIVVACFFYEQHNRQGWEVAHNCNSCQPEMAQPHRPDYAVFMLKYFMCLVVGITSGVWIWSGKTLESWRAFCTRCCWGSKATGGSMYSDVSTGLTWRSGTGSSVSCPKQMPLSQV</sequence>
<dbReference type="EMBL" id="AF017177">
    <property type="protein sequence ID" value="AAC31121.1"/>
    <property type="molecule type" value="mRNA"/>
</dbReference>
<dbReference type="EMBL" id="AF033110">
    <property type="protein sequence ID" value="AAC77361.1"/>
    <property type="molecule type" value="mRNA"/>
</dbReference>
<dbReference type="RefSeq" id="NP_001079144.1">
    <property type="nucleotide sequence ID" value="NM_001085675.1"/>
</dbReference>
<dbReference type="RefSeq" id="NP_001084206.1">
    <property type="nucleotide sequence ID" value="NM_001090737.1"/>
</dbReference>
<dbReference type="SMR" id="O93274"/>
<dbReference type="IntAct" id="O93274">
    <property type="interactions" value="1"/>
</dbReference>
<dbReference type="MINT" id="O93274"/>
<dbReference type="GlyCosmos" id="O93274">
    <property type="glycosylation" value="2 sites, No reported glycans"/>
</dbReference>
<dbReference type="GeneID" id="373690"/>
<dbReference type="GeneID" id="399367"/>
<dbReference type="KEGG" id="xla:373690"/>
<dbReference type="KEGG" id="xla:399367"/>
<dbReference type="CTD" id="373690"/>
<dbReference type="CTD" id="399367"/>
<dbReference type="OrthoDB" id="10053709at2759"/>
<dbReference type="Proteomes" id="UP000186698">
    <property type="component" value="Chromosome 6L"/>
</dbReference>
<dbReference type="Proteomes" id="UP000186698">
    <property type="component" value="Chromosome 6S"/>
</dbReference>
<dbReference type="Bgee" id="373690">
    <property type="expression patterns" value="Expressed in liver and 14 other cell types or tissues"/>
</dbReference>
<dbReference type="GO" id="GO:0005886">
    <property type="term" value="C:plasma membrane"/>
    <property type="evidence" value="ECO:0000318"/>
    <property type="project" value="GO_Central"/>
</dbReference>
<dbReference type="GO" id="GO:0004930">
    <property type="term" value="F:G protein-coupled receptor activity"/>
    <property type="evidence" value="ECO:0007669"/>
    <property type="project" value="UniProtKB-KW"/>
</dbReference>
<dbReference type="GO" id="GO:0042813">
    <property type="term" value="F:Wnt receptor activity"/>
    <property type="evidence" value="ECO:0000318"/>
    <property type="project" value="GO_Central"/>
</dbReference>
<dbReference type="GO" id="GO:0017147">
    <property type="term" value="F:Wnt-protein binding"/>
    <property type="evidence" value="ECO:0000318"/>
    <property type="project" value="GO_Central"/>
</dbReference>
<dbReference type="GO" id="GO:0060070">
    <property type="term" value="P:canonical Wnt signaling pathway"/>
    <property type="evidence" value="ECO:0000314"/>
    <property type="project" value="BHF-UCL"/>
</dbReference>
<dbReference type="GO" id="GO:0035567">
    <property type="term" value="P:non-canonical Wnt signaling pathway"/>
    <property type="evidence" value="ECO:0000318"/>
    <property type="project" value="GO_Central"/>
</dbReference>
<dbReference type="GO" id="GO:0045944">
    <property type="term" value="P:positive regulation of transcription by RNA polymerase II"/>
    <property type="evidence" value="ECO:0000314"/>
    <property type="project" value="BHF-UCL"/>
</dbReference>
<dbReference type="CDD" id="cd15250">
    <property type="entry name" value="7tmF_FZD8"/>
    <property type="match status" value="1"/>
</dbReference>
<dbReference type="CDD" id="cd07461">
    <property type="entry name" value="CRD_FZ8"/>
    <property type="match status" value="1"/>
</dbReference>
<dbReference type="FunFam" id="1.10.2000.10:FF:000004">
    <property type="entry name" value="Frizzled class receptor 8a"/>
    <property type="match status" value="1"/>
</dbReference>
<dbReference type="FunFam" id="1.20.1070.10:FF:000053">
    <property type="entry name" value="Frizzled class receptor 8a"/>
    <property type="match status" value="1"/>
</dbReference>
<dbReference type="Gene3D" id="1.10.2000.10">
    <property type="entry name" value="Frizzled cysteine-rich domain"/>
    <property type="match status" value="1"/>
</dbReference>
<dbReference type="Gene3D" id="1.20.1070.10">
    <property type="entry name" value="Rhodopsin 7-helix transmembrane proteins"/>
    <property type="match status" value="1"/>
</dbReference>
<dbReference type="InterPro" id="IPR015526">
    <property type="entry name" value="Frizzled/SFRP"/>
</dbReference>
<dbReference type="InterPro" id="IPR000539">
    <property type="entry name" value="Frizzled/Smoothened_7TM"/>
</dbReference>
<dbReference type="InterPro" id="IPR020067">
    <property type="entry name" value="Frizzled_dom"/>
</dbReference>
<dbReference type="InterPro" id="IPR036790">
    <property type="entry name" value="Frizzled_dom_sf"/>
</dbReference>
<dbReference type="InterPro" id="IPR041776">
    <property type="entry name" value="FZ8_CRD"/>
</dbReference>
<dbReference type="InterPro" id="IPR017981">
    <property type="entry name" value="GPCR_2-like_7TM"/>
</dbReference>
<dbReference type="PANTHER" id="PTHR11309">
    <property type="entry name" value="FRIZZLED"/>
    <property type="match status" value="1"/>
</dbReference>
<dbReference type="PANTHER" id="PTHR11309:SF90">
    <property type="entry name" value="FRIZZLED-8"/>
    <property type="match status" value="1"/>
</dbReference>
<dbReference type="Pfam" id="PF01534">
    <property type="entry name" value="Frizzled"/>
    <property type="match status" value="1"/>
</dbReference>
<dbReference type="Pfam" id="PF01392">
    <property type="entry name" value="Fz"/>
    <property type="match status" value="1"/>
</dbReference>
<dbReference type="PRINTS" id="PR00489">
    <property type="entry name" value="FRIZZLED"/>
</dbReference>
<dbReference type="SMART" id="SM00063">
    <property type="entry name" value="FRI"/>
    <property type="match status" value="1"/>
</dbReference>
<dbReference type="SMART" id="SM01330">
    <property type="entry name" value="Frizzled"/>
    <property type="match status" value="1"/>
</dbReference>
<dbReference type="SUPFAM" id="SSF63501">
    <property type="entry name" value="Frizzled cysteine-rich domain"/>
    <property type="match status" value="1"/>
</dbReference>
<dbReference type="PROSITE" id="PS50038">
    <property type="entry name" value="FZ"/>
    <property type="match status" value="1"/>
</dbReference>
<dbReference type="PROSITE" id="PS50261">
    <property type="entry name" value="G_PROTEIN_RECEP_F2_4"/>
    <property type="match status" value="1"/>
</dbReference>
<proteinExistence type="evidence at protein level"/>
<keyword id="KW-1003">Cell membrane</keyword>
<keyword id="KW-0217">Developmental protein</keyword>
<keyword id="KW-1015">Disulfide bond</keyword>
<keyword id="KW-0297">G-protein coupled receptor</keyword>
<keyword id="KW-0325">Glycoprotein</keyword>
<keyword id="KW-0472">Membrane</keyword>
<keyword id="KW-0675">Receptor</keyword>
<keyword id="KW-1185">Reference proteome</keyword>
<keyword id="KW-0732">Signal</keyword>
<keyword id="KW-0807">Transducer</keyword>
<keyword id="KW-0812">Transmembrane</keyword>
<keyword id="KW-1133">Transmembrane helix</keyword>
<keyword id="KW-0879">Wnt signaling pathway</keyword>
<gene>
    <name type="primary">fzd8</name>
    <name type="synonym">fz8</name>
</gene>
<protein>
    <recommendedName>
        <fullName>Frizzled-8</fullName>
        <shortName>Fz-8</shortName>
        <shortName>Xfz8</shortName>
    </recommendedName>
</protein>
<reference key="1">
    <citation type="journal article" date="1998" name="Mech. Dev.">
        <title>A role for Xenopus Frizzled 8 in dorsal development.</title>
        <authorList>
            <person name="Itoh K."/>
            <person name="Jacob J."/>
            <person name="Sokol S.Y."/>
        </authorList>
    </citation>
    <scope>NUCLEOTIDE SEQUENCE [MRNA]</scope>
    <scope>COUPLING TO BETA-CATENIN PATHWAY</scope>
    <source>
        <tissue>Embryo</tissue>
    </source>
</reference>
<reference key="2">
    <citation type="journal article" date="1998" name="Development">
        <title>Frizzled-8 is expressed in the Spemann organizer and plays a role in early morphogenesis.</title>
        <authorList>
            <person name="Deardorff M.A."/>
            <person name="Tan C."/>
            <person name="Conrad L.J."/>
            <person name="Klein P.S."/>
        </authorList>
    </citation>
    <scope>NUCLEOTIDE SEQUENCE [MRNA]</scope>
    <source>
        <tissue>Embryo</tissue>
    </source>
</reference>
<reference key="3">
    <citation type="journal article" date="1999" name="Proc. Natl. Acad. Sci. U.S.A.">
        <title>Biochemical characterization of Wnt-frizzled interactions using a soluble, biologically active vertebrate Wnt protein.</title>
        <authorList>
            <person name="Hsieh J.C."/>
            <person name="Rattner A."/>
            <person name="Smallwood P.M."/>
            <person name="Nathans J."/>
        </authorList>
    </citation>
    <scope>FUNCTION</scope>
    <scope>SUBCELLULAR LOCATION</scope>
</reference>
<reference key="4">
    <citation type="journal article" date="2013" name="Dev. Cell">
        <title>Lypd6 enhances Wnt/beta-catenin signaling by promoting Lrp6 phosphorylation in raft plasma membrane domains.</title>
        <authorList>
            <person name="Oezhan G."/>
            <person name="Sezgin E."/>
            <person name="Wehner D."/>
            <person name="Pfister A.S."/>
            <person name="Kuehl S.J."/>
            <person name="Kagermeier-Schenk B."/>
            <person name="Kuehl M."/>
            <person name="Schwille P."/>
            <person name="Weidinger G."/>
        </authorList>
    </citation>
    <scope>INTERACTION WITH LYPD6</scope>
</reference>
<comment type="function">
    <text evidence="5">Receptor for Wnt proteins. Most of frizzled receptors are coupled to the beta-catenin canonical signaling pathway, which leads to the activation of disheveled proteins, inhibition of GSK-3 kinase, nuclear accumulation of beta-catenin and activation of Wnt target genes. A second signaling pathway involving PKC and calcium fluxes has been seen for some family members, but it is not yet clear if it represents a distinct pathway or if it can be integrated in the canonical pathway, as PKC seems to be required for Wnt-mediated inactivation of GSK-3 kinase. Both pathways seem to involve interactions with G-proteins. May be involved in transduction and intercellular transmission of polarity information during tissue morphogenesis and/or in differentiated tissues. Activation by Wnt8, Wnt5A or Wnt3A induces expression of beta-catenin target genes. Displays an axis-inducing activity.</text>
</comment>
<comment type="subunit">
    <text evidence="6">Interacts with lypd6 and the interaction is strongly enhanced by wnt3a (PubMed:23987510).</text>
</comment>
<comment type="interaction">
    <interactant intactId="EBI-7735236">
        <id>O93274</id>
    </interactant>
    <interactant intactId="EBI-7735259">
        <id>Q6EHH9</id>
        <label>FRIED</label>
    </interactant>
    <organismsDiffer>false</organismsDiffer>
    <experiments>2</experiments>
</comment>
<comment type="subcellular location">
    <subcellularLocation>
        <location evidence="5">Membrane</location>
        <topology evidence="5">Multi-pass membrane protein</topology>
    </subcellularLocation>
    <subcellularLocation>
        <location evidence="1">Cell membrane</location>
        <topology evidence="1">Multi-pass membrane protein</topology>
    </subcellularLocation>
</comment>
<comment type="developmental stage">
    <text>First expressed at high levels in the late blastula stages. At early gastrula, expressed in the deep cells of the Spemann organizer prior to involution of the dorsal blastopore lip. Detected in presumptive neurectoderm as gastrulation proceeds. Becomes restricted to the anterior ectoderm by the end of gastrulation. At neurula stages, localized in the most anterior region of the embryo, mainly in the anterior ectoderm including telencephalic and cement gland regions.</text>
</comment>
<comment type="domain">
    <text evidence="1">Lys-Thr-X-X-X-Trp motif interacts with the PDZ domain of Dvl (Disheveled) family members and is involved in the activation of the Wnt/beta-catenin signaling pathway.</text>
</comment>
<comment type="domain">
    <text evidence="1">The FZ domain is involved in binding with Wnt ligands.</text>
</comment>
<comment type="similarity">
    <text evidence="7">Belongs to the G-protein coupled receptor Fz/Smo family.</text>
</comment>
<evidence type="ECO:0000250" key="1"/>
<evidence type="ECO:0000255" key="2"/>
<evidence type="ECO:0000255" key="3">
    <source>
        <dbReference type="PROSITE-ProRule" id="PRU00090"/>
    </source>
</evidence>
<evidence type="ECO:0000256" key="4">
    <source>
        <dbReference type="SAM" id="MobiDB-lite"/>
    </source>
</evidence>
<evidence type="ECO:0000269" key="5">
    <source>
    </source>
</evidence>
<evidence type="ECO:0000269" key="6">
    <source>
    </source>
</evidence>
<evidence type="ECO:0000305" key="7"/>
<accession>O93274</accession>
<accession>Q9YI55</accession>
<feature type="signal peptide" evidence="2">
    <location>
        <begin position="1"/>
        <end position="23"/>
    </location>
</feature>
<feature type="chain" id="PRO_0000013002" description="Frizzled-8">
    <location>
        <begin position="24"/>
        <end position="581"/>
    </location>
</feature>
<feature type="topological domain" description="Extracellular" evidence="2">
    <location>
        <begin position="24"/>
        <end position="239"/>
    </location>
</feature>
<feature type="transmembrane region" description="Helical; Name=1" evidence="2">
    <location>
        <begin position="240"/>
        <end position="260"/>
    </location>
</feature>
<feature type="topological domain" description="Cytoplasmic" evidence="2">
    <location>
        <begin position="261"/>
        <end position="271"/>
    </location>
</feature>
<feature type="transmembrane region" description="Helical; Name=2" evidence="2">
    <location>
        <begin position="272"/>
        <end position="292"/>
    </location>
</feature>
<feature type="topological domain" description="Extracellular" evidence="2">
    <location>
        <begin position="293"/>
        <end position="320"/>
    </location>
</feature>
<feature type="transmembrane region" description="Helical; Name=3" evidence="2">
    <location>
        <begin position="321"/>
        <end position="341"/>
    </location>
</feature>
<feature type="topological domain" description="Cytoplasmic" evidence="2">
    <location>
        <begin position="342"/>
        <end position="377"/>
    </location>
</feature>
<feature type="transmembrane region" description="Helical; Name=4" evidence="2">
    <location>
        <begin position="378"/>
        <end position="398"/>
    </location>
</feature>
<feature type="topological domain" description="Extracellular" evidence="2">
    <location>
        <begin position="399"/>
        <end position="407"/>
    </location>
</feature>
<feature type="transmembrane region" description="Helical; Name=5" evidence="2">
    <location>
        <begin position="408"/>
        <end position="428"/>
    </location>
</feature>
<feature type="topological domain" description="Cytoplasmic" evidence="2">
    <location>
        <begin position="429"/>
        <end position="454"/>
    </location>
</feature>
<feature type="transmembrane region" description="Helical; Name=6" evidence="2">
    <location>
        <begin position="455"/>
        <end position="475"/>
    </location>
</feature>
<feature type="topological domain" description="Extracellular" evidence="2">
    <location>
        <begin position="476"/>
        <end position="505"/>
    </location>
</feature>
<feature type="transmembrane region" description="Helical; Name=7" evidence="2">
    <location>
        <begin position="506"/>
        <end position="526"/>
    </location>
</feature>
<feature type="topological domain" description="Cytoplasmic" evidence="2">
    <location>
        <begin position="527"/>
        <end position="581"/>
    </location>
</feature>
<feature type="domain" description="FZ" evidence="3">
    <location>
        <begin position="24"/>
        <end position="144"/>
    </location>
</feature>
<feature type="region of interest" description="Wnt-binding" evidence="1">
    <location>
        <begin position="88"/>
        <end position="93"/>
    </location>
</feature>
<feature type="region of interest" description="Wnt-binding" evidence="1">
    <location>
        <begin position="140"/>
        <end position="146"/>
    </location>
</feature>
<feature type="region of interest" description="Disordered" evidence="4">
    <location>
        <begin position="151"/>
        <end position="189"/>
    </location>
</feature>
<feature type="short sequence motif" description="Lys-Thr-X-X-X-Trp motif, mediates interaction with the PDZ domain of Dvl family members" evidence="1">
    <location>
        <begin position="529"/>
        <end position="534"/>
    </location>
</feature>
<feature type="short sequence motif" description="PDZ-binding">
    <location>
        <begin position="579"/>
        <end position="581"/>
    </location>
</feature>
<feature type="compositionally biased region" description="Pro residues" evidence="4">
    <location>
        <begin position="157"/>
        <end position="166"/>
    </location>
</feature>
<feature type="binding site" evidence="1">
    <location>
        <begin position="64"/>
        <end position="71"/>
    </location>
    <ligand>
        <name>hexadecanoate</name>
        <dbReference type="ChEBI" id="CHEBI:7896"/>
    </ligand>
</feature>
<feature type="glycosylation site" description="N-linked (GlcNAc...) asparagine" evidence="2">
    <location>
        <position position="42"/>
    </location>
</feature>
<feature type="glycosylation site" description="N-linked (GlcNAc...) asparagine" evidence="2">
    <location>
        <position position="146"/>
    </location>
</feature>
<feature type="disulfide bond" evidence="3">
    <location>
        <begin position="28"/>
        <end position="89"/>
    </location>
</feature>
<feature type="disulfide bond" evidence="3">
    <location>
        <begin position="36"/>
        <end position="82"/>
    </location>
</feature>
<feature type="disulfide bond" evidence="3">
    <location>
        <begin position="73"/>
        <end position="111"/>
    </location>
</feature>
<feature type="disulfide bond" evidence="3">
    <location>
        <begin position="100"/>
        <end position="141"/>
    </location>
</feature>
<feature type="disulfide bond" evidence="3">
    <location>
        <begin position="104"/>
        <end position="128"/>
    </location>
</feature>
<feature type="sequence conflict" description="In Ref. 2." evidence="7" ref="2">
    <original>MES</original>
    <variation>MECPY</variation>
    <location>
        <begin position="1"/>
        <end position="3"/>
    </location>
</feature>
<feature type="sequence conflict" description="In Ref. 2; AAC77361." evidence="7" ref="2">
    <original>S</original>
    <variation>L</variation>
    <location>
        <position position="7"/>
    </location>
</feature>
<feature type="sequence conflict" description="In Ref. 2; AAC77361." evidence="7" ref="2">
    <original>L</original>
    <variation>V</variation>
    <location>
        <position position="10"/>
    </location>
</feature>
<feature type="sequence conflict" description="In Ref. 2; AAC77361." evidence="7" ref="2">
    <original>W</original>
    <variation>G</variation>
    <location>
        <position position="14"/>
    </location>
</feature>
<feature type="sequence conflict" description="In Ref. 2; AAC77361." evidence="7" ref="2">
    <original>C</original>
    <variation>S</variation>
    <location>
        <position position="20"/>
    </location>
</feature>
<feature type="sequence conflict" description="In Ref. 2; AAC77361." evidence="7" ref="2">
    <original>G</original>
    <variation>S</variation>
    <location>
        <position position="135"/>
    </location>
</feature>
<feature type="sequence conflict" description="In Ref. 2; AAC77361." evidence="7" ref="2">
    <original>G</original>
    <variation>S</variation>
    <location>
        <position position="171"/>
    </location>
</feature>
<feature type="sequence conflict" description="In Ref. 2; AAC77361." evidence="7" ref="2">
    <original>V</original>
    <variation>A</variation>
    <location>
        <position position="175"/>
    </location>
</feature>
<feature type="sequence conflict" description="In Ref. 2; AAC77361." evidence="7" ref="2">
    <original>T</original>
    <variation>P</variation>
    <location>
        <position position="185"/>
    </location>
</feature>
<feature type="sequence conflict" description="In Ref. 2; AAC77361." evidence="7" ref="2">
    <original>I</original>
    <variation>T</variation>
    <location>
        <position position="216"/>
    </location>
</feature>
<feature type="sequence conflict" description="In Ref. 2; AAC77361." evidence="7" ref="2">
    <original>E</original>
    <variation>D</variation>
    <location>
        <position position="237"/>
    </location>
</feature>
<feature type="sequence conflict" description="In Ref. 2; AAC77361." evidence="7" ref="2">
    <original>PEM</original>
    <variation>SEG</variation>
    <location>
        <begin position="494"/>
        <end position="496"/>
    </location>
</feature>
<feature type="sequence conflict" description="In Ref. 2; AAC77361." evidence="7" ref="2">
    <original>H</original>
    <variation>R</variation>
    <location>
        <position position="500"/>
    </location>
</feature>
<feature type="sequence conflict" description="In Ref. 2; AAC77361." evidence="7" ref="2">
    <original>A</original>
    <variation>T</variation>
    <location>
        <position position="547"/>
    </location>
</feature>
<feature type="sequence conflict" description="In Ref. 2; AAC77361." evidence="7" ref="2">
    <original>G</original>
    <variation>A</variation>
    <location>
        <position position="565"/>
    </location>
</feature>
<feature type="sequence conflict" description="In Ref. 2; AAC77361." evidence="7" ref="2">
    <original>C</original>
    <variation>Y</variation>
    <location>
        <position position="572"/>
    </location>
</feature>